<reference key="1">
    <citation type="journal article" date="2008" name="Antimicrob. Agents Chemother.">
        <title>Whole-genome pyrosequencing of an epidemic multidrug-resistant Acinetobacter baumannii strain belonging to the European clone II group.</title>
        <authorList>
            <person name="Iacono M."/>
            <person name="Villa L."/>
            <person name="Fortini D."/>
            <person name="Bordoni R."/>
            <person name="Imperi F."/>
            <person name="Bonnal R.J."/>
            <person name="Sicheritz-Ponten T."/>
            <person name="De Bellis G."/>
            <person name="Visca P."/>
            <person name="Cassone A."/>
            <person name="Carattoli A."/>
        </authorList>
    </citation>
    <scope>NUCLEOTIDE SEQUENCE [LARGE SCALE GENOMIC DNA]</scope>
    <source>
        <strain>ACICU</strain>
    </source>
</reference>
<dbReference type="EMBL" id="CP000863">
    <property type="protein sequence ID" value="ACC55684.1"/>
    <property type="molecule type" value="Genomic_DNA"/>
</dbReference>
<dbReference type="RefSeq" id="WP_001229357.1">
    <property type="nucleotide sequence ID" value="NZ_CP031380.1"/>
</dbReference>
<dbReference type="SMR" id="B2I2P9"/>
<dbReference type="GeneID" id="92892353"/>
<dbReference type="KEGG" id="abc:ACICU_00372"/>
<dbReference type="HOGENOM" id="CLU_148518_0_0_6"/>
<dbReference type="Proteomes" id="UP000008839">
    <property type="component" value="Chromosome"/>
</dbReference>
<dbReference type="GO" id="GO:0022627">
    <property type="term" value="C:cytosolic small ribosomal subunit"/>
    <property type="evidence" value="ECO:0007669"/>
    <property type="project" value="TreeGrafter"/>
</dbReference>
<dbReference type="GO" id="GO:0019843">
    <property type="term" value="F:rRNA binding"/>
    <property type="evidence" value="ECO:0007669"/>
    <property type="project" value="UniProtKB-UniRule"/>
</dbReference>
<dbReference type="GO" id="GO:0003735">
    <property type="term" value="F:structural constituent of ribosome"/>
    <property type="evidence" value="ECO:0007669"/>
    <property type="project" value="InterPro"/>
</dbReference>
<dbReference type="GO" id="GO:0006412">
    <property type="term" value="P:translation"/>
    <property type="evidence" value="ECO:0007669"/>
    <property type="project" value="UniProtKB-UniRule"/>
</dbReference>
<dbReference type="CDD" id="cd00353">
    <property type="entry name" value="Ribosomal_S15p_S13e"/>
    <property type="match status" value="1"/>
</dbReference>
<dbReference type="FunFam" id="1.10.287.10:FF:000002">
    <property type="entry name" value="30S ribosomal protein S15"/>
    <property type="match status" value="1"/>
</dbReference>
<dbReference type="Gene3D" id="6.10.250.3130">
    <property type="match status" value="1"/>
</dbReference>
<dbReference type="Gene3D" id="1.10.287.10">
    <property type="entry name" value="S15/NS1, RNA-binding"/>
    <property type="match status" value="1"/>
</dbReference>
<dbReference type="HAMAP" id="MF_01343_B">
    <property type="entry name" value="Ribosomal_uS15_B"/>
    <property type="match status" value="1"/>
</dbReference>
<dbReference type="InterPro" id="IPR000589">
    <property type="entry name" value="Ribosomal_uS15"/>
</dbReference>
<dbReference type="InterPro" id="IPR005290">
    <property type="entry name" value="Ribosomal_uS15_bac-type"/>
</dbReference>
<dbReference type="InterPro" id="IPR009068">
    <property type="entry name" value="uS15_NS1_RNA-bd_sf"/>
</dbReference>
<dbReference type="NCBIfam" id="TIGR00952">
    <property type="entry name" value="S15_bact"/>
    <property type="match status" value="1"/>
</dbReference>
<dbReference type="PANTHER" id="PTHR23321">
    <property type="entry name" value="RIBOSOMAL PROTEIN S15, BACTERIAL AND ORGANELLAR"/>
    <property type="match status" value="1"/>
</dbReference>
<dbReference type="PANTHER" id="PTHR23321:SF26">
    <property type="entry name" value="SMALL RIBOSOMAL SUBUNIT PROTEIN US15M"/>
    <property type="match status" value="1"/>
</dbReference>
<dbReference type="Pfam" id="PF00312">
    <property type="entry name" value="Ribosomal_S15"/>
    <property type="match status" value="1"/>
</dbReference>
<dbReference type="SMART" id="SM01387">
    <property type="entry name" value="Ribosomal_S15"/>
    <property type="match status" value="1"/>
</dbReference>
<dbReference type="SUPFAM" id="SSF47060">
    <property type="entry name" value="S15/NS1 RNA-binding domain"/>
    <property type="match status" value="1"/>
</dbReference>
<dbReference type="PROSITE" id="PS00362">
    <property type="entry name" value="RIBOSOMAL_S15"/>
    <property type="match status" value="1"/>
</dbReference>
<name>RS15_ACIBC</name>
<sequence>MALTNADRAEIIAKFARAENDTGSPEVQVALLTAQINDLQGHFKAHKHDHHSRRGLIRMVNQRRKLLDYLNGKDHERYTALIGALGLRR</sequence>
<accession>B2I2P9</accession>
<keyword id="KW-0687">Ribonucleoprotein</keyword>
<keyword id="KW-0689">Ribosomal protein</keyword>
<keyword id="KW-0694">RNA-binding</keyword>
<keyword id="KW-0699">rRNA-binding</keyword>
<gene>
    <name evidence="1" type="primary">rpsO</name>
    <name type="ordered locus">ACICU_00372</name>
</gene>
<protein>
    <recommendedName>
        <fullName evidence="1">Small ribosomal subunit protein uS15</fullName>
    </recommendedName>
    <alternativeName>
        <fullName evidence="2">30S ribosomal protein S15</fullName>
    </alternativeName>
</protein>
<evidence type="ECO:0000255" key="1">
    <source>
        <dbReference type="HAMAP-Rule" id="MF_01343"/>
    </source>
</evidence>
<evidence type="ECO:0000305" key="2"/>
<proteinExistence type="inferred from homology"/>
<organism>
    <name type="scientific">Acinetobacter baumannii (strain ACICU)</name>
    <dbReference type="NCBI Taxonomy" id="405416"/>
    <lineage>
        <taxon>Bacteria</taxon>
        <taxon>Pseudomonadati</taxon>
        <taxon>Pseudomonadota</taxon>
        <taxon>Gammaproteobacteria</taxon>
        <taxon>Moraxellales</taxon>
        <taxon>Moraxellaceae</taxon>
        <taxon>Acinetobacter</taxon>
        <taxon>Acinetobacter calcoaceticus/baumannii complex</taxon>
    </lineage>
</organism>
<feature type="chain" id="PRO_1000143060" description="Small ribosomal subunit protein uS15">
    <location>
        <begin position="1"/>
        <end position="89"/>
    </location>
</feature>
<comment type="function">
    <text evidence="1">One of the primary rRNA binding proteins, it binds directly to 16S rRNA where it helps nucleate assembly of the platform of the 30S subunit by binding and bridging several RNA helices of the 16S rRNA.</text>
</comment>
<comment type="function">
    <text evidence="1">Forms an intersubunit bridge (bridge B4) with the 23S rRNA of the 50S subunit in the ribosome.</text>
</comment>
<comment type="subunit">
    <text evidence="1">Part of the 30S ribosomal subunit. Forms a bridge to the 50S subunit in the 70S ribosome, contacting the 23S rRNA.</text>
</comment>
<comment type="similarity">
    <text evidence="1">Belongs to the universal ribosomal protein uS15 family.</text>
</comment>